<gene>
    <name evidence="1" type="primary">tig</name>
    <name type="ordered locus">Synpcc7942_2524</name>
    <name type="ORF">seb0003</name>
</gene>
<name>TIG_SYNE7</name>
<sequence>MSIKVTQEKLPASRVGLQIEVSGEQSRQVYERTLTRLSREVRFPGFRPGKVPRPVLIQRLGETALKANAIEDLVQQSLESAIAQESIPAIGNYQLSSDFETLVAAFQPGESFSFEASVDVQPTATLAQYTGLTVEVAEVPFDANRVDNVLAEQQKQMATLVPVEGRNAAIGDVAVIDFQGILVESGEEIPGGSGTDFQIEVEEDRFIPGFISGIVGMAIEETRTVDATFPETYAQEEVAGKAAQFTITLKELKTRDLPELDDAFAQEASQYETIEELKTALTERFQAEHESEVKASKRDAILTALADQLDVEIPESLLQREISAMINETASRLSGQGMDVRKLFTEEVLERLRENSKDEAEQRLRRTIALGELAKVTETQVDDEAVKARAAELLSNYPRPQEIDRDRLNTVVREELLEDKLLEWFEANNSVTFVAPKAAETEVDAASATVETTATETAEEAPEAPKAKKGKKKA</sequence>
<dbReference type="EC" id="5.2.1.8" evidence="1"/>
<dbReference type="EMBL" id="U30252">
    <property type="protein sequence ID" value="AAL03915.1"/>
    <property type="molecule type" value="Genomic_DNA"/>
</dbReference>
<dbReference type="EMBL" id="CP000100">
    <property type="protein sequence ID" value="ABB58554.1"/>
    <property type="molecule type" value="Genomic_DNA"/>
</dbReference>
<dbReference type="RefSeq" id="WP_011378504.1">
    <property type="nucleotide sequence ID" value="NZ_JACJTX010000001.1"/>
</dbReference>
<dbReference type="SMR" id="Q935Z3"/>
<dbReference type="STRING" id="1140.Synpcc7942_2524"/>
<dbReference type="PaxDb" id="1140-Synpcc7942_2524"/>
<dbReference type="GeneID" id="72431415"/>
<dbReference type="KEGG" id="syf:Synpcc7942_2524"/>
<dbReference type="eggNOG" id="COG0544">
    <property type="taxonomic scope" value="Bacteria"/>
</dbReference>
<dbReference type="HOGENOM" id="CLU_033058_3_1_3"/>
<dbReference type="OrthoDB" id="9767721at2"/>
<dbReference type="BioCyc" id="SYNEL:SYNPCC7942_2524-MONOMER"/>
<dbReference type="Proteomes" id="UP000889800">
    <property type="component" value="Chromosome"/>
</dbReference>
<dbReference type="GO" id="GO:0005737">
    <property type="term" value="C:cytoplasm"/>
    <property type="evidence" value="ECO:0007669"/>
    <property type="project" value="UniProtKB-SubCell"/>
</dbReference>
<dbReference type="GO" id="GO:0003755">
    <property type="term" value="F:peptidyl-prolyl cis-trans isomerase activity"/>
    <property type="evidence" value="ECO:0007669"/>
    <property type="project" value="UniProtKB-UniRule"/>
</dbReference>
<dbReference type="GO" id="GO:0044183">
    <property type="term" value="F:protein folding chaperone"/>
    <property type="evidence" value="ECO:0007669"/>
    <property type="project" value="TreeGrafter"/>
</dbReference>
<dbReference type="GO" id="GO:0043022">
    <property type="term" value="F:ribosome binding"/>
    <property type="evidence" value="ECO:0007669"/>
    <property type="project" value="TreeGrafter"/>
</dbReference>
<dbReference type="GO" id="GO:0051083">
    <property type="term" value="P:'de novo' cotranslational protein folding"/>
    <property type="evidence" value="ECO:0007669"/>
    <property type="project" value="TreeGrafter"/>
</dbReference>
<dbReference type="GO" id="GO:0051301">
    <property type="term" value="P:cell division"/>
    <property type="evidence" value="ECO:0007669"/>
    <property type="project" value="UniProtKB-KW"/>
</dbReference>
<dbReference type="GO" id="GO:0061077">
    <property type="term" value="P:chaperone-mediated protein folding"/>
    <property type="evidence" value="ECO:0007669"/>
    <property type="project" value="TreeGrafter"/>
</dbReference>
<dbReference type="GO" id="GO:0015031">
    <property type="term" value="P:protein transport"/>
    <property type="evidence" value="ECO:0007669"/>
    <property type="project" value="UniProtKB-UniRule"/>
</dbReference>
<dbReference type="GO" id="GO:0043335">
    <property type="term" value="P:protein unfolding"/>
    <property type="evidence" value="ECO:0007669"/>
    <property type="project" value="TreeGrafter"/>
</dbReference>
<dbReference type="FunFam" id="3.10.50.40:FF:000001">
    <property type="entry name" value="Trigger factor"/>
    <property type="match status" value="1"/>
</dbReference>
<dbReference type="FunFam" id="3.30.70.1050:FF:000004">
    <property type="entry name" value="Trigger factor"/>
    <property type="match status" value="1"/>
</dbReference>
<dbReference type="Gene3D" id="3.10.50.40">
    <property type="match status" value="1"/>
</dbReference>
<dbReference type="Gene3D" id="3.30.70.1050">
    <property type="entry name" value="Trigger factor ribosome-binding domain"/>
    <property type="match status" value="1"/>
</dbReference>
<dbReference type="Gene3D" id="1.10.3120.10">
    <property type="entry name" value="Trigger factor, C-terminal domain"/>
    <property type="match status" value="1"/>
</dbReference>
<dbReference type="HAMAP" id="MF_00303">
    <property type="entry name" value="Trigger_factor_Tig"/>
    <property type="match status" value="1"/>
</dbReference>
<dbReference type="InterPro" id="IPR046357">
    <property type="entry name" value="PPIase_dom_sf"/>
</dbReference>
<dbReference type="InterPro" id="IPR001179">
    <property type="entry name" value="PPIase_FKBP_dom"/>
</dbReference>
<dbReference type="InterPro" id="IPR005215">
    <property type="entry name" value="Trig_fac"/>
</dbReference>
<dbReference type="InterPro" id="IPR008880">
    <property type="entry name" value="Trigger_fac_C"/>
</dbReference>
<dbReference type="InterPro" id="IPR037041">
    <property type="entry name" value="Trigger_fac_C_sf"/>
</dbReference>
<dbReference type="InterPro" id="IPR008881">
    <property type="entry name" value="Trigger_fac_ribosome-bd_bac"/>
</dbReference>
<dbReference type="InterPro" id="IPR036611">
    <property type="entry name" value="Trigger_fac_ribosome-bd_sf"/>
</dbReference>
<dbReference type="InterPro" id="IPR027304">
    <property type="entry name" value="Trigger_fact/SurA_dom_sf"/>
</dbReference>
<dbReference type="NCBIfam" id="TIGR00115">
    <property type="entry name" value="tig"/>
    <property type="match status" value="1"/>
</dbReference>
<dbReference type="PANTHER" id="PTHR30560">
    <property type="entry name" value="TRIGGER FACTOR CHAPERONE AND PEPTIDYL-PROLYL CIS/TRANS ISOMERASE"/>
    <property type="match status" value="1"/>
</dbReference>
<dbReference type="PANTHER" id="PTHR30560:SF3">
    <property type="entry name" value="TRIGGER FACTOR-LIKE PROTEIN TIG, CHLOROPLASTIC"/>
    <property type="match status" value="1"/>
</dbReference>
<dbReference type="Pfam" id="PF00254">
    <property type="entry name" value="FKBP_C"/>
    <property type="match status" value="1"/>
</dbReference>
<dbReference type="Pfam" id="PF05698">
    <property type="entry name" value="Trigger_C"/>
    <property type="match status" value="1"/>
</dbReference>
<dbReference type="Pfam" id="PF05697">
    <property type="entry name" value="Trigger_N"/>
    <property type="match status" value="1"/>
</dbReference>
<dbReference type="PIRSF" id="PIRSF003095">
    <property type="entry name" value="Trigger_factor"/>
    <property type="match status" value="1"/>
</dbReference>
<dbReference type="SUPFAM" id="SSF54534">
    <property type="entry name" value="FKBP-like"/>
    <property type="match status" value="1"/>
</dbReference>
<dbReference type="SUPFAM" id="SSF109998">
    <property type="entry name" value="Triger factor/SurA peptide-binding domain-like"/>
    <property type="match status" value="1"/>
</dbReference>
<dbReference type="SUPFAM" id="SSF102735">
    <property type="entry name" value="Trigger factor ribosome-binding domain"/>
    <property type="match status" value="1"/>
</dbReference>
<dbReference type="PROSITE" id="PS50059">
    <property type="entry name" value="FKBP_PPIASE"/>
    <property type="match status" value="1"/>
</dbReference>
<reference key="1">
    <citation type="submission" date="2001-09" db="EMBL/GenBank/DDBJ databases">
        <title>Synechococcus elongatus PCC7942 genome sequence, cosmid 7H1 and 2E8.</title>
        <authorList>
            <person name="Holtman C.K."/>
            <person name="Socias T."/>
            <person name="Mohler B.J."/>
            <person name="Chen Y."/>
            <person name="Min H."/>
            <person name="Golden S.S."/>
            <person name="Youderian P."/>
        </authorList>
    </citation>
    <scope>NUCLEOTIDE SEQUENCE [GENOMIC DNA]</scope>
</reference>
<reference key="2">
    <citation type="submission" date="2005-08" db="EMBL/GenBank/DDBJ databases">
        <title>Complete sequence of chromosome 1 of Synechococcus elongatus PCC 7942.</title>
        <authorList>
            <consortium name="US DOE Joint Genome Institute"/>
            <person name="Copeland A."/>
            <person name="Lucas S."/>
            <person name="Lapidus A."/>
            <person name="Barry K."/>
            <person name="Detter J.C."/>
            <person name="Glavina T."/>
            <person name="Hammon N."/>
            <person name="Israni S."/>
            <person name="Pitluck S."/>
            <person name="Schmutz J."/>
            <person name="Larimer F."/>
            <person name="Land M."/>
            <person name="Kyrpides N."/>
            <person name="Lykidis A."/>
            <person name="Golden S."/>
            <person name="Richardson P."/>
        </authorList>
    </citation>
    <scope>NUCLEOTIDE SEQUENCE [LARGE SCALE GENOMIC DNA]</scope>
    <source>
        <strain>ATCC 33912 / PCC 7942 / FACHB-805</strain>
    </source>
</reference>
<feature type="chain" id="PRO_0000179449" description="Trigger factor">
    <location>
        <begin position="1"/>
        <end position="474"/>
    </location>
</feature>
<feature type="domain" description="PPIase FKBP-type" evidence="1">
    <location>
        <begin position="171"/>
        <end position="258"/>
    </location>
</feature>
<feature type="region of interest" description="Disordered" evidence="2">
    <location>
        <begin position="441"/>
        <end position="474"/>
    </location>
</feature>
<feature type="compositionally biased region" description="Low complexity" evidence="2">
    <location>
        <begin position="444"/>
        <end position="456"/>
    </location>
</feature>
<comment type="function">
    <text evidence="1">Involved in protein export. Acts as a chaperone by maintaining the newly synthesized protein in an open conformation. Functions as a peptidyl-prolyl cis-trans isomerase.</text>
</comment>
<comment type="catalytic activity">
    <reaction evidence="1">
        <text>[protein]-peptidylproline (omega=180) = [protein]-peptidylproline (omega=0)</text>
        <dbReference type="Rhea" id="RHEA:16237"/>
        <dbReference type="Rhea" id="RHEA-COMP:10747"/>
        <dbReference type="Rhea" id="RHEA-COMP:10748"/>
        <dbReference type="ChEBI" id="CHEBI:83833"/>
        <dbReference type="ChEBI" id="CHEBI:83834"/>
        <dbReference type="EC" id="5.2.1.8"/>
    </reaction>
</comment>
<comment type="subcellular location">
    <subcellularLocation>
        <location>Cytoplasm</location>
    </subcellularLocation>
    <text evidence="1">About half TF is bound to the ribosome near the polypeptide exit tunnel while the other half is free in the cytoplasm.</text>
</comment>
<comment type="domain">
    <text evidence="1">Consists of 3 domains; the N-terminus binds the ribosome, the middle domain has PPIase activity, while the C-terminus has intrinsic chaperone activity on its own.</text>
</comment>
<comment type="similarity">
    <text evidence="1">Belongs to the FKBP-type PPIase family. Tig subfamily.</text>
</comment>
<accession>Q935Z3</accession>
<accession>Q31K65</accession>
<evidence type="ECO:0000255" key="1">
    <source>
        <dbReference type="HAMAP-Rule" id="MF_00303"/>
    </source>
</evidence>
<evidence type="ECO:0000256" key="2">
    <source>
        <dbReference type="SAM" id="MobiDB-lite"/>
    </source>
</evidence>
<proteinExistence type="inferred from homology"/>
<organism>
    <name type="scientific">Synechococcus elongatus (strain ATCC 33912 / PCC 7942 / FACHB-805)</name>
    <name type="common">Anacystis nidulans R2</name>
    <dbReference type="NCBI Taxonomy" id="1140"/>
    <lineage>
        <taxon>Bacteria</taxon>
        <taxon>Bacillati</taxon>
        <taxon>Cyanobacteriota</taxon>
        <taxon>Cyanophyceae</taxon>
        <taxon>Synechococcales</taxon>
        <taxon>Synechococcaceae</taxon>
        <taxon>Synechococcus</taxon>
    </lineage>
</organism>
<protein>
    <recommendedName>
        <fullName evidence="1">Trigger factor</fullName>
        <shortName evidence="1">TF</shortName>
        <ecNumber evidence="1">5.2.1.8</ecNumber>
    </recommendedName>
    <alternativeName>
        <fullName evidence="1">PPIase</fullName>
    </alternativeName>
</protein>
<keyword id="KW-0131">Cell cycle</keyword>
<keyword id="KW-0132">Cell division</keyword>
<keyword id="KW-0143">Chaperone</keyword>
<keyword id="KW-0963">Cytoplasm</keyword>
<keyword id="KW-0413">Isomerase</keyword>
<keyword id="KW-1185">Reference proteome</keyword>
<keyword id="KW-0697">Rotamase</keyword>